<comment type="function">
    <text evidence="1 3">Bifunctional enzyme with both catalase and broad-spectrum peroxidase activity.</text>
</comment>
<comment type="catalytic activity">
    <reaction evidence="1">
        <text>H2O2 + AH2 = A + 2 H2O</text>
        <dbReference type="Rhea" id="RHEA:30275"/>
        <dbReference type="ChEBI" id="CHEBI:13193"/>
        <dbReference type="ChEBI" id="CHEBI:15377"/>
        <dbReference type="ChEBI" id="CHEBI:16240"/>
        <dbReference type="ChEBI" id="CHEBI:17499"/>
        <dbReference type="EC" id="1.11.1.21"/>
    </reaction>
</comment>
<comment type="catalytic activity">
    <reaction evidence="1">
        <text>2 H2O2 = O2 + 2 H2O</text>
        <dbReference type="Rhea" id="RHEA:20309"/>
        <dbReference type="ChEBI" id="CHEBI:15377"/>
        <dbReference type="ChEBI" id="CHEBI:15379"/>
        <dbReference type="ChEBI" id="CHEBI:16240"/>
        <dbReference type="EC" id="1.11.1.21"/>
    </reaction>
</comment>
<comment type="cofactor">
    <cofactor evidence="1">
        <name>heme b</name>
        <dbReference type="ChEBI" id="CHEBI:60344"/>
    </cofactor>
    <text evidence="1">Binds 1 heme b (iron(II)-protoporphyrin IX) group per dimer.</text>
</comment>
<comment type="subunit">
    <text evidence="3">Homodimer.</text>
</comment>
<comment type="induction">
    <text evidence="3">Induced in late exponential growth phase (at protein level).</text>
</comment>
<comment type="PTM">
    <text evidence="1">Formation of the three residue Trp-Tyr-Met cross-link is important for the catalase, but not the peroxidase activity of the enzyme.</text>
</comment>
<comment type="similarity">
    <text evidence="1">Belongs to the peroxidase family. Peroxidase/catalase subfamily.</text>
</comment>
<gene>
    <name evidence="1" type="primary">katG</name>
    <name type="synonym">catC</name>
    <name type="synonym">cpeB</name>
    <name type="ordered locus">SCO0560</name>
    <name type="ORF">SCF73.07c</name>
</gene>
<dbReference type="EC" id="1.11.1.21" evidence="1"/>
<dbReference type="EMBL" id="AF126956">
    <property type="protein sequence ID" value="AAF78102.1"/>
    <property type="molecule type" value="Genomic_DNA"/>
</dbReference>
<dbReference type="EMBL" id="AL939106">
    <property type="protein sequence ID" value="CAB57412.1"/>
    <property type="molecule type" value="Genomic_DNA"/>
</dbReference>
<dbReference type="RefSeq" id="NP_624873.1">
    <property type="nucleotide sequence ID" value="NC_003888.3"/>
</dbReference>
<dbReference type="RefSeq" id="WP_011027206.1">
    <property type="nucleotide sequence ID" value="NZ_VNID01000015.1"/>
</dbReference>
<dbReference type="SMR" id="Q9RJH9"/>
<dbReference type="FunCoup" id="Q9RJH9">
    <property type="interactions" value="9"/>
</dbReference>
<dbReference type="STRING" id="100226.gene:17758143"/>
<dbReference type="PeroxiBase" id="2351">
    <property type="entry name" value="ScoCP01_A3"/>
</dbReference>
<dbReference type="PaxDb" id="100226-SCO0560"/>
<dbReference type="GeneID" id="91388522"/>
<dbReference type="KEGG" id="sco:SCO0560"/>
<dbReference type="PATRIC" id="fig|100226.15.peg.541"/>
<dbReference type="eggNOG" id="COG0376">
    <property type="taxonomic scope" value="Bacteria"/>
</dbReference>
<dbReference type="HOGENOM" id="CLU_025424_2_0_11"/>
<dbReference type="InParanoid" id="Q9RJH9"/>
<dbReference type="OrthoDB" id="9759743at2"/>
<dbReference type="PhylomeDB" id="Q9RJH9"/>
<dbReference type="Proteomes" id="UP000001973">
    <property type="component" value="Chromosome"/>
</dbReference>
<dbReference type="GO" id="GO:0005829">
    <property type="term" value="C:cytosol"/>
    <property type="evidence" value="ECO:0000318"/>
    <property type="project" value="GO_Central"/>
</dbReference>
<dbReference type="GO" id="GO:0004096">
    <property type="term" value="F:catalase activity"/>
    <property type="evidence" value="ECO:0000318"/>
    <property type="project" value="GO_Central"/>
</dbReference>
<dbReference type="GO" id="GO:0020037">
    <property type="term" value="F:heme binding"/>
    <property type="evidence" value="ECO:0000318"/>
    <property type="project" value="GO_Central"/>
</dbReference>
<dbReference type="GO" id="GO:0046872">
    <property type="term" value="F:metal ion binding"/>
    <property type="evidence" value="ECO:0007669"/>
    <property type="project" value="UniProtKB-KW"/>
</dbReference>
<dbReference type="GO" id="GO:0070301">
    <property type="term" value="P:cellular response to hydrogen peroxide"/>
    <property type="evidence" value="ECO:0000318"/>
    <property type="project" value="GO_Central"/>
</dbReference>
<dbReference type="GO" id="GO:0042744">
    <property type="term" value="P:hydrogen peroxide catabolic process"/>
    <property type="evidence" value="ECO:0000318"/>
    <property type="project" value="GO_Central"/>
</dbReference>
<dbReference type="CDD" id="cd00649">
    <property type="entry name" value="catalase_peroxidase_1"/>
    <property type="match status" value="1"/>
</dbReference>
<dbReference type="CDD" id="cd08200">
    <property type="entry name" value="catalase_peroxidase_2"/>
    <property type="match status" value="1"/>
</dbReference>
<dbReference type="FunFam" id="1.10.420.10:FF:000002">
    <property type="entry name" value="Catalase-peroxidase"/>
    <property type="match status" value="1"/>
</dbReference>
<dbReference type="FunFam" id="1.10.420.10:FF:000004">
    <property type="entry name" value="Catalase-peroxidase"/>
    <property type="match status" value="1"/>
</dbReference>
<dbReference type="FunFam" id="1.10.520.10:FF:000002">
    <property type="entry name" value="Catalase-peroxidase"/>
    <property type="match status" value="1"/>
</dbReference>
<dbReference type="Gene3D" id="1.10.520.10">
    <property type="match status" value="2"/>
</dbReference>
<dbReference type="Gene3D" id="1.10.420.10">
    <property type="entry name" value="Peroxidase, domain 2"/>
    <property type="match status" value="2"/>
</dbReference>
<dbReference type="HAMAP" id="MF_01961">
    <property type="entry name" value="Catal_peroxid"/>
    <property type="match status" value="1"/>
</dbReference>
<dbReference type="InterPro" id="IPR000763">
    <property type="entry name" value="Catalase_peroxidase"/>
</dbReference>
<dbReference type="InterPro" id="IPR002016">
    <property type="entry name" value="Haem_peroxidase"/>
</dbReference>
<dbReference type="InterPro" id="IPR010255">
    <property type="entry name" value="Haem_peroxidase_sf"/>
</dbReference>
<dbReference type="InterPro" id="IPR019794">
    <property type="entry name" value="Peroxidases_AS"/>
</dbReference>
<dbReference type="InterPro" id="IPR019793">
    <property type="entry name" value="Peroxidases_heam-ligand_BS"/>
</dbReference>
<dbReference type="NCBIfam" id="TIGR00198">
    <property type="entry name" value="cat_per_HPI"/>
    <property type="match status" value="1"/>
</dbReference>
<dbReference type="NCBIfam" id="NF011635">
    <property type="entry name" value="PRK15061.1"/>
    <property type="match status" value="1"/>
</dbReference>
<dbReference type="PANTHER" id="PTHR30555:SF0">
    <property type="entry name" value="CATALASE-PEROXIDASE"/>
    <property type="match status" value="1"/>
</dbReference>
<dbReference type="PANTHER" id="PTHR30555">
    <property type="entry name" value="HYDROPEROXIDASE I, BIFUNCTIONAL CATALASE-PEROXIDASE"/>
    <property type="match status" value="1"/>
</dbReference>
<dbReference type="Pfam" id="PF00141">
    <property type="entry name" value="peroxidase"/>
    <property type="match status" value="2"/>
</dbReference>
<dbReference type="PRINTS" id="PR00460">
    <property type="entry name" value="BPEROXIDASE"/>
</dbReference>
<dbReference type="PRINTS" id="PR00458">
    <property type="entry name" value="PEROXIDASE"/>
</dbReference>
<dbReference type="SUPFAM" id="SSF48113">
    <property type="entry name" value="Heme-dependent peroxidases"/>
    <property type="match status" value="2"/>
</dbReference>
<dbReference type="PROSITE" id="PS00435">
    <property type="entry name" value="PEROXIDASE_1"/>
    <property type="match status" value="1"/>
</dbReference>
<dbReference type="PROSITE" id="PS00436">
    <property type="entry name" value="PEROXIDASE_2"/>
    <property type="match status" value="1"/>
</dbReference>
<dbReference type="PROSITE" id="PS50873">
    <property type="entry name" value="PEROXIDASE_4"/>
    <property type="match status" value="1"/>
</dbReference>
<name>KATG_STRCO</name>
<protein>
    <recommendedName>
        <fullName evidence="1">Catalase-peroxidase</fullName>
        <shortName evidence="1">CP</shortName>
        <ecNumber evidence="1">1.11.1.21</ecNumber>
    </recommendedName>
    <alternativeName>
        <fullName evidence="1">Peroxidase/catalase</fullName>
    </alternativeName>
</protein>
<reference key="1">
    <citation type="journal article" date="2000" name="J. Bacteriol.">
        <title>Regulation of the furA and catC operon, encoding a ferric uptake regulator homologue and catalase-peroxidase, respectively, in Streptomyces coelicolor A3(2).</title>
        <authorList>
            <person name="Hahn J.-S."/>
            <person name="Oh S.-Y."/>
            <person name="Roe J.-H."/>
        </authorList>
    </citation>
    <scope>NUCLEOTIDE SEQUENCE [GENOMIC DNA]</scope>
    <scope>FUNCTION</scope>
    <scope>INDUCTION</scope>
    <scope>SUBUNIT</scope>
    <source>
        <strain>ATCC BAA-471 / A3(2) / M145</strain>
    </source>
</reference>
<reference key="2">
    <citation type="journal article" date="2002" name="Nature">
        <title>Complete genome sequence of the model actinomycete Streptomyces coelicolor A3(2).</title>
        <authorList>
            <person name="Bentley S.D."/>
            <person name="Chater K.F."/>
            <person name="Cerdeno-Tarraga A.-M."/>
            <person name="Challis G.L."/>
            <person name="Thomson N.R."/>
            <person name="James K.D."/>
            <person name="Harris D.E."/>
            <person name="Quail M.A."/>
            <person name="Kieser H."/>
            <person name="Harper D."/>
            <person name="Bateman A."/>
            <person name="Brown S."/>
            <person name="Chandra G."/>
            <person name="Chen C.W."/>
            <person name="Collins M."/>
            <person name="Cronin A."/>
            <person name="Fraser A."/>
            <person name="Goble A."/>
            <person name="Hidalgo J."/>
            <person name="Hornsby T."/>
            <person name="Howarth S."/>
            <person name="Huang C.-H."/>
            <person name="Kieser T."/>
            <person name="Larke L."/>
            <person name="Murphy L.D."/>
            <person name="Oliver K."/>
            <person name="O'Neil S."/>
            <person name="Rabbinowitsch E."/>
            <person name="Rajandream M.A."/>
            <person name="Rutherford K.M."/>
            <person name="Rutter S."/>
            <person name="Seeger K."/>
            <person name="Saunders D."/>
            <person name="Sharp S."/>
            <person name="Squares R."/>
            <person name="Squares S."/>
            <person name="Taylor K."/>
            <person name="Warren T."/>
            <person name="Wietzorrek A."/>
            <person name="Woodward J.R."/>
            <person name="Barrell B.G."/>
            <person name="Parkhill J."/>
            <person name="Hopwood D.A."/>
        </authorList>
    </citation>
    <scope>NUCLEOTIDE SEQUENCE [LARGE SCALE GENOMIC DNA]</scope>
    <source>
        <strain>ATCC BAA-471 / A3(2) / M145</strain>
    </source>
</reference>
<organism>
    <name type="scientific">Streptomyces coelicolor (strain ATCC BAA-471 / A3(2) / M145)</name>
    <dbReference type="NCBI Taxonomy" id="100226"/>
    <lineage>
        <taxon>Bacteria</taxon>
        <taxon>Bacillati</taxon>
        <taxon>Actinomycetota</taxon>
        <taxon>Actinomycetes</taxon>
        <taxon>Kitasatosporales</taxon>
        <taxon>Streptomycetaceae</taxon>
        <taxon>Streptomyces</taxon>
        <taxon>Streptomyces albidoflavus group</taxon>
    </lineage>
</organism>
<sequence>MSENHDAIVTDAKTEETDGCPVAHGRAPHPTQGGGNRQWWPERLNLKILAKNPAVANPLGEEFDYAEAFEALDLAAVKRDIAEVLTTSQDWWPADFGNYGPLMIRMAWHSAGTYRISDGRGGAGAGQQRFAPLNSWPDNGNLDKARRLLWPVKKKYGQNLSWADLLVLTGNVALETMGFETFGFAGGRADVWEAEEDVYWGPETTWLDDRRYTGDRELENPLGAVQMGLIYVNPEGPNGNPDPIAAARDIRETFRRMAMNDEETVALIAGGHTFGKTHGAGPADAVGDDPEAAAMEQQGLGWKSTHGTGKGGDAITSGLEVTWTSTPTQWGNGFFKNLFEFEYELEQSPAGANQWVAKDAPEIIPDAHDPAKKHRPRMLTTDLSLRLDPIYGPISRRFYENPEEFADAFARAWFKLTHRDMGPKSLYLGPEVPEETLIWQDPLPEPEGEVIDAEDVATLKTKLLESGLSVSQLVTTAWASASTFRGSDKRGGANGARIRLEPQRGWEVNEPDELAQVLRVLEGVQREFNSGSGAKKVSLADLIVLGGSAAVEKAAKEAGFPVEVPFAAGRVDATEEHTDAESFEALEPTADGFRNYLGKGNRLPAEFLLLDRANLLTLSAPEMTVLVGGLRVLGAGHQQSQLGVFTRTPGSLTNDFFVNLLDLGTTWKSTSEDRTTFEGRDAATGEVKWAGSRADLVFGSNAELRALAEVYASDDAGEKFVHDFVAAWVKVMNLDRFDLA</sequence>
<evidence type="ECO:0000255" key="1">
    <source>
        <dbReference type="HAMAP-Rule" id="MF_01961"/>
    </source>
</evidence>
<evidence type="ECO:0000256" key="2">
    <source>
        <dbReference type="SAM" id="MobiDB-lite"/>
    </source>
</evidence>
<evidence type="ECO:0000269" key="3">
    <source>
    </source>
</evidence>
<evidence type="ECO:0000305" key="4"/>
<proteinExistence type="evidence at protein level"/>
<accession>Q9RJH9</accession>
<accession>Q9KK92</accession>
<feature type="chain" id="PRO_0000055576" description="Catalase-peroxidase">
    <location>
        <begin position="1"/>
        <end position="740"/>
    </location>
</feature>
<feature type="region of interest" description="Disordered" evidence="2">
    <location>
        <begin position="1"/>
        <end position="38"/>
    </location>
</feature>
<feature type="compositionally biased region" description="Basic and acidic residues" evidence="2">
    <location>
        <begin position="1"/>
        <end position="16"/>
    </location>
</feature>
<feature type="active site" description="Proton acceptor" evidence="1">
    <location>
        <position position="109"/>
    </location>
</feature>
<feature type="binding site" description="axial binding residue" evidence="1">
    <location>
        <position position="272"/>
    </location>
    <ligand>
        <name>heme b</name>
        <dbReference type="ChEBI" id="CHEBI:60344"/>
    </ligand>
    <ligandPart>
        <name>Fe</name>
        <dbReference type="ChEBI" id="CHEBI:18248"/>
    </ligandPart>
</feature>
<feature type="site" description="Transition state stabilizer" evidence="1">
    <location>
        <position position="105"/>
    </location>
</feature>
<feature type="cross-link" description="Tryptophyl-tyrosyl-methioninium (Trp-Tyr) (with M-257)" evidence="1">
    <location>
        <begin position="108"/>
        <end position="231"/>
    </location>
</feature>
<feature type="cross-link" description="Tryptophyl-tyrosyl-methioninium (Tyr-Met) (with W-108)" evidence="1">
    <location>
        <begin position="231"/>
        <end position="257"/>
    </location>
</feature>
<feature type="sequence conflict" description="In Ref. 1; AAF78102." evidence="4" ref="1">
    <original>D</original>
    <variation>A</variation>
    <location>
        <position position="215"/>
    </location>
</feature>
<feature type="sequence conflict" description="In Ref. 1; AAF78102." evidence="4" ref="1">
    <original>A</original>
    <variation>G</variation>
    <location>
        <position position="258"/>
    </location>
</feature>
<feature type="sequence conflict" description="In Ref. 1; AAF78102." evidence="4" ref="1">
    <original>H</original>
    <variation>Y</variation>
    <location>
        <position position="306"/>
    </location>
</feature>
<feature type="sequence conflict" description="In Ref. 1; AAF78102." evidence="4" ref="1">
    <original>A</original>
    <variation>L</variation>
    <location>
        <position position="585"/>
    </location>
</feature>
<feature type="sequence conflict" description="In Ref. 1; AAF78102." evidence="4" ref="1">
    <original>HD</original>
    <variation>QH</variation>
    <location>
        <begin position="722"/>
        <end position="723"/>
    </location>
</feature>
<keyword id="KW-0349">Heme</keyword>
<keyword id="KW-0376">Hydrogen peroxide</keyword>
<keyword id="KW-0408">Iron</keyword>
<keyword id="KW-0479">Metal-binding</keyword>
<keyword id="KW-0560">Oxidoreductase</keyword>
<keyword id="KW-0575">Peroxidase</keyword>
<keyword id="KW-1185">Reference proteome</keyword>